<reference key="1">
    <citation type="journal article" date="2006" name="Proc. Natl. Acad. Sci. U.S.A.">
        <title>Comparative genomics of the lactic acid bacteria.</title>
        <authorList>
            <person name="Makarova K.S."/>
            <person name="Slesarev A."/>
            <person name="Wolf Y.I."/>
            <person name="Sorokin A."/>
            <person name="Mirkin B."/>
            <person name="Koonin E.V."/>
            <person name="Pavlov A."/>
            <person name="Pavlova N."/>
            <person name="Karamychev V."/>
            <person name="Polouchine N."/>
            <person name="Shakhova V."/>
            <person name="Grigoriev I."/>
            <person name="Lou Y."/>
            <person name="Rohksar D."/>
            <person name="Lucas S."/>
            <person name="Huang K."/>
            <person name="Goodstein D.M."/>
            <person name="Hawkins T."/>
            <person name="Plengvidhya V."/>
            <person name="Welker D."/>
            <person name="Hughes J."/>
            <person name="Goh Y."/>
            <person name="Benson A."/>
            <person name="Baldwin K."/>
            <person name="Lee J.-H."/>
            <person name="Diaz-Muniz I."/>
            <person name="Dosti B."/>
            <person name="Smeianov V."/>
            <person name="Wechter W."/>
            <person name="Barabote R."/>
            <person name="Lorca G."/>
            <person name="Altermann E."/>
            <person name="Barrangou R."/>
            <person name="Ganesan B."/>
            <person name="Xie Y."/>
            <person name="Rawsthorne H."/>
            <person name="Tamir D."/>
            <person name="Parker C."/>
            <person name="Breidt F."/>
            <person name="Broadbent J.R."/>
            <person name="Hutkins R."/>
            <person name="O'Sullivan D."/>
            <person name="Steele J."/>
            <person name="Unlu G."/>
            <person name="Saier M.H. Jr."/>
            <person name="Klaenhammer T."/>
            <person name="Richardson P."/>
            <person name="Kozyavkin S."/>
            <person name="Weimer B.C."/>
            <person name="Mills D.A."/>
        </authorList>
    </citation>
    <scope>NUCLEOTIDE SEQUENCE [LARGE SCALE GENOMIC DNA]</scope>
    <source>
        <strain>ATCC 367 / BCRC 12310 / CIP 105137 / JCM 1170 / LMG 11437 / NCIMB 947 / NCTC 947</strain>
    </source>
</reference>
<name>DNAJ_LEVBA</name>
<evidence type="ECO:0000255" key="1">
    <source>
        <dbReference type="HAMAP-Rule" id="MF_01152"/>
    </source>
</evidence>
<evidence type="ECO:0000256" key="2">
    <source>
        <dbReference type="SAM" id="MobiDB-lite"/>
    </source>
</evidence>
<proteinExistence type="inferred from homology"/>
<protein>
    <recommendedName>
        <fullName evidence="1">Chaperone protein DnaJ</fullName>
    </recommendedName>
</protein>
<comment type="function">
    <text evidence="1">Participates actively in the response to hyperosmotic and heat shock by preventing the aggregation of stress-denatured proteins and by disaggregating proteins, also in an autonomous, DnaK-independent fashion. Unfolded proteins bind initially to DnaJ; upon interaction with the DnaJ-bound protein, DnaK hydrolyzes its bound ATP, resulting in the formation of a stable complex. GrpE releases ADP from DnaK; ATP binding to DnaK triggers the release of the substrate protein, thus completing the reaction cycle. Several rounds of ATP-dependent interactions between DnaJ, DnaK and GrpE are required for fully efficient folding. Also involved, together with DnaK and GrpE, in the DNA replication of plasmids through activation of initiation proteins.</text>
</comment>
<comment type="cofactor">
    <cofactor evidence="1">
        <name>Zn(2+)</name>
        <dbReference type="ChEBI" id="CHEBI:29105"/>
    </cofactor>
    <text evidence="1">Binds 2 Zn(2+) ions per monomer.</text>
</comment>
<comment type="subunit">
    <text evidence="1">Homodimer.</text>
</comment>
<comment type="subcellular location">
    <subcellularLocation>
        <location evidence="1">Cytoplasm</location>
    </subcellularLocation>
</comment>
<comment type="domain">
    <text evidence="1">The J domain is necessary and sufficient to stimulate DnaK ATPase activity. Zinc center 1 plays an important role in the autonomous, DnaK-independent chaperone activity of DnaJ. Zinc center 2 is essential for interaction with DnaK and for DnaJ activity.</text>
</comment>
<comment type="similarity">
    <text evidence="1">Belongs to the DnaJ family.</text>
</comment>
<sequence length="382" mass="40836">MAQSDLYGVLGVAKDASQDEIKKAYRKLSKKYHPDLNKAPDAAEKFKEVQDAYDVLGDEQKRANYDQSGSADGAQGGFGGFGGGQQGGFGGFGGGGGFDDIFNQFFGGGGGQRNPNAPRPGRDLQYQMDLTFEEAIFGKKTKIKYNREAQCHTCGGNGAKPGTSPVTCHQCGGSGYVTTETNTPLGRMRSQQPCPVCHGTGQEIKEKCPTCGGSGHEEERHEVEVTIPAGVDDGQQMRLQGQGEAGQNGGGYGDLFIIFKVQPSKDFRRDGTEIYFDQDISFVQATLGDDVTVKTVHGDVKLKVPAGTQGGTTFRLRGKGAPRLRGNGNGDEHVTIKVVTPKNLNKGQRDALRDFAKASGESVTGSGKGNLFNKMRDKFNEN</sequence>
<organism>
    <name type="scientific">Levilactobacillus brevis (strain ATCC 367 / BCRC 12310 / CIP 105137 / JCM 1170 / LMG 11437 / NCIMB 947 / NCTC 947)</name>
    <name type="common">Lactobacillus brevis</name>
    <dbReference type="NCBI Taxonomy" id="387344"/>
    <lineage>
        <taxon>Bacteria</taxon>
        <taxon>Bacillati</taxon>
        <taxon>Bacillota</taxon>
        <taxon>Bacilli</taxon>
        <taxon>Lactobacillales</taxon>
        <taxon>Lactobacillaceae</taxon>
        <taxon>Levilactobacillus</taxon>
    </lineage>
</organism>
<feature type="chain" id="PRO_1000137695" description="Chaperone protein DnaJ">
    <location>
        <begin position="1"/>
        <end position="382"/>
    </location>
</feature>
<feature type="domain" description="J" evidence="1">
    <location>
        <begin position="5"/>
        <end position="69"/>
    </location>
</feature>
<feature type="repeat" description="CXXCXGXG motif">
    <location>
        <begin position="151"/>
        <end position="158"/>
    </location>
</feature>
<feature type="repeat" description="CXXCXGXG motif">
    <location>
        <begin position="168"/>
        <end position="175"/>
    </location>
</feature>
<feature type="repeat" description="CXXCXGXG motif">
    <location>
        <begin position="194"/>
        <end position="201"/>
    </location>
</feature>
<feature type="repeat" description="CXXCXGXG motif">
    <location>
        <begin position="208"/>
        <end position="215"/>
    </location>
</feature>
<feature type="zinc finger region" description="CR-type" evidence="1">
    <location>
        <begin position="138"/>
        <end position="220"/>
    </location>
</feature>
<feature type="region of interest" description="Disordered" evidence="2">
    <location>
        <begin position="104"/>
        <end position="123"/>
    </location>
</feature>
<feature type="region of interest" description="Disordered" evidence="2">
    <location>
        <begin position="358"/>
        <end position="382"/>
    </location>
</feature>
<feature type="binding site" evidence="1">
    <location>
        <position position="151"/>
    </location>
    <ligand>
        <name>Zn(2+)</name>
        <dbReference type="ChEBI" id="CHEBI:29105"/>
        <label>1</label>
    </ligand>
</feature>
<feature type="binding site" evidence="1">
    <location>
        <position position="154"/>
    </location>
    <ligand>
        <name>Zn(2+)</name>
        <dbReference type="ChEBI" id="CHEBI:29105"/>
        <label>1</label>
    </ligand>
</feature>
<feature type="binding site" evidence="1">
    <location>
        <position position="168"/>
    </location>
    <ligand>
        <name>Zn(2+)</name>
        <dbReference type="ChEBI" id="CHEBI:29105"/>
        <label>2</label>
    </ligand>
</feature>
<feature type="binding site" evidence="1">
    <location>
        <position position="171"/>
    </location>
    <ligand>
        <name>Zn(2+)</name>
        <dbReference type="ChEBI" id="CHEBI:29105"/>
        <label>2</label>
    </ligand>
</feature>
<feature type="binding site" evidence="1">
    <location>
        <position position="194"/>
    </location>
    <ligand>
        <name>Zn(2+)</name>
        <dbReference type="ChEBI" id="CHEBI:29105"/>
        <label>2</label>
    </ligand>
</feature>
<feature type="binding site" evidence="1">
    <location>
        <position position="197"/>
    </location>
    <ligand>
        <name>Zn(2+)</name>
        <dbReference type="ChEBI" id="CHEBI:29105"/>
        <label>2</label>
    </ligand>
</feature>
<feature type="binding site" evidence="1">
    <location>
        <position position="208"/>
    </location>
    <ligand>
        <name>Zn(2+)</name>
        <dbReference type="ChEBI" id="CHEBI:29105"/>
        <label>1</label>
    </ligand>
</feature>
<feature type="binding site" evidence="1">
    <location>
        <position position="211"/>
    </location>
    <ligand>
        <name>Zn(2+)</name>
        <dbReference type="ChEBI" id="CHEBI:29105"/>
        <label>1</label>
    </ligand>
</feature>
<keyword id="KW-0143">Chaperone</keyword>
<keyword id="KW-0963">Cytoplasm</keyword>
<keyword id="KW-0235">DNA replication</keyword>
<keyword id="KW-0479">Metal-binding</keyword>
<keyword id="KW-1185">Reference proteome</keyword>
<keyword id="KW-0677">Repeat</keyword>
<keyword id="KW-0346">Stress response</keyword>
<keyword id="KW-0862">Zinc</keyword>
<keyword id="KW-0863">Zinc-finger</keyword>
<gene>
    <name evidence="1" type="primary">dnaJ</name>
    <name type="ordered locus">LVIS_1328</name>
</gene>
<accession>Q03QU2</accession>
<dbReference type="EMBL" id="CP000416">
    <property type="protein sequence ID" value="ABJ64430.1"/>
    <property type="molecule type" value="Genomic_DNA"/>
</dbReference>
<dbReference type="RefSeq" id="WP_011668003.1">
    <property type="nucleotide sequence ID" value="NC_008497.1"/>
</dbReference>
<dbReference type="SMR" id="Q03QU2"/>
<dbReference type="STRING" id="387344.LVIS_1328"/>
<dbReference type="KEGG" id="lbr:LVIS_1328"/>
<dbReference type="PATRIC" id="fig|387344.15.peg.1262"/>
<dbReference type="eggNOG" id="COG0484">
    <property type="taxonomic scope" value="Bacteria"/>
</dbReference>
<dbReference type="HOGENOM" id="CLU_017633_0_7_9"/>
<dbReference type="Proteomes" id="UP000001652">
    <property type="component" value="Chromosome"/>
</dbReference>
<dbReference type="GO" id="GO:0005737">
    <property type="term" value="C:cytoplasm"/>
    <property type="evidence" value="ECO:0007669"/>
    <property type="project" value="UniProtKB-SubCell"/>
</dbReference>
<dbReference type="GO" id="GO:0005524">
    <property type="term" value="F:ATP binding"/>
    <property type="evidence" value="ECO:0007669"/>
    <property type="project" value="InterPro"/>
</dbReference>
<dbReference type="GO" id="GO:0031072">
    <property type="term" value="F:heat shock protein binding"/>
    <property type="evidence" value="ECO:0007669"/>
    <property type="project" value="InterPro"/>
</dbReference>
<dbReference type="GO" id="GO:0051082">
    <property type="term" value="F:unfolded protein binding"/>
    <property type="evidence" value="ECO:0007669"/>
    <property type="project" value="UniProtKB-UniRule"/>
</dbReference>
<dbReference type="GO" id="GO:0008270">
    <property type="term" value="F:zinc ion binding"/>
    <property type="evidence" value="ECO:0007669"/>
    <property type="project" value="UniProtKB-UniRule"/>
</dbReference>
<dbReference type="GO" id="GO:0051085">
    <property type="term" value="P:chaperone cofactor-dependent protein refolding"/>
    <property type="evidence" value="ECO:0007669"/>
    <property type="project" value="TreeGrafter"/>
</dbReference>
<dbReference type="GO" id="GO:0006260">
    <property type="term" value="P:DNA replication"/>
    <property type="evidence" value="ECO:0007669"/>
    <property type="project" value="UniProtKB-KW"/>
</dbReference>
<dbReference type="GO" id="GO:0042026">
    <property type="term" value="P:protein refolding"/>
    <property type="evidence" value="ECO:0007669"/>
    <property type="project" value="TreeGrafter"/>
</dbReference>
<dbReference type="GO" id="GO:0009408">
    <property type="term" value="P:response to heat"/>
    <property type="evidence" value="ECO:0007669"/>
    <property type="project" value="InterPro"/>
</dbReference>
<dbReference type="CDD" id="cd06257">
    <property type="entry name" value="DnaJ"/>
    <property type="match status" value="1"/>
</dbReference>
<dbReference type="CDD" id="cd10747">
    <property type="entry name" value="DnaJ_C"/>
    <property type="match status" value="1"/>
</dbReference>
<dbReference type="FunFam" id="2.60.260.20:FF:000005">
    <property type="entry name" value="Chaperone protein dnaJ 1, mitochondrial"/>
    <property type="match status" value="1"/>
</dbReference>
<dbReference type="FunFam" id="1.10.287.110:FF:000031">
    <property type="entry name" value="Molecular chaperone DnaJ"/>
    <property type="match status" value="1"/>
</dbReference>
<dbReference type="FunFam" id="2.10.230.10:FF:000002">
    <property type="entry name" value="Molecular chaperone DnaJ"/>
    <property type="match status" value="1"/>
</dbReference>
<dbReference type="Gene3D" id="1.10.287.110">
    <property type="entry name" value="DnaJ domain"/>
    <property type="match status" value="1"/>
</dbReference>
<dbReference type="Gene3D" id="2.10.230.10">
    <property type="entry name" value="Heat shock protein DnaJ, cysteine-rich domain"/>
    <property type="match status" value="1"/>
</dbReference>
<dbReference type="Gene3D" id="2.60.260.20">
    <property type="entry name" value="Urease metallochaperone UreE, N-terminal domain"/>
    <property type="match status" value="2"/>
</dbReference>
<dbReference type="HAMAP" id="MF_01152">
    <property type="entry name" value="DnaJ"/>
    <property type="match status" value="1"/>
</dbReference>
<dbReference type="InterPro" id="IPR012724">
    <property type="entry name" value="DnaJ"/>
</dbReference>
<dbReference type="InterPro" id="IPR002939">
    <property type="entry name" value="DnaJ_C"/>
</dbReference>
<dbReference type="InterPro" id="IPR001623">
    <property type="entry name" value="DnaJ_domain"/>
</dbReference>
<dbReference type="InterPro" id="IPR018253">
    <property type="entry name" value="DnaJ_domain_CS"/>
</dbReference>
<dbReference type="InterPro" id="IPR008971">
    <property type="entry name" value="HSP40/DnaJ_pept-bd"/>
</dbReference>
<dbReference type="InterPro" id="IPR001305">
    <property type="entry name" value="HSP_DnaJ_Cys-rich_dom"/>
</dbReference>
<dbReference type="InterPro" id="IPR036410">
    <property type="entry name" value="HSP_DnaJ_Cys-rich_dom_sf"/>
</dbReference>
<dbReference type="InterPro" id="IPR036869">
    <property type="entry name" value="J_dom_sf"/>
</dbReference>
<dbReference type="NCBIfam" id="TIGR02349">
    <property type="entry name" value="DnaJ_bact"/>
    <property type="match status" value="1"/>
</dbReference>
<dbReference type="NCBIfam" id="NF008035">
    <property type="entry name" value="PRK10767.1"/>
    <property type="match status" value="1"/>
</dbReference>
<dbReference type="NCBIfam" id="NF010869">
    <property type="entry name" value="PRK14276.1"/>
    <property type="match status" value="1"/>
</dbReference>
<dbReference type="PANTHER" id="PTHR43096:SF48">
    <property type="entry name" value="CHAPERONE PROTEIN DNAJ"/>
    <property type="match status" value="1"/>
</dbReference>
<dbReference type="PANTHER" id="PTHR43096">
    <property type="entry name" value="DNAJ HOMOLOG 1, MITOCHONDRIAL-RELATED"/>
    <property type="match status" value="1"/>
</dbReference>
<dbReference type="Pfam" id="PF00226">
    <property type="entry name" value="DnaJ"/>
    <property type="match status" value="1"/>
</dbReference>
<dbReference type="Pfam" id="PF01556">
    <property type="entry name" value="DnaJ_C"/>
    <property type="match status" value="1"/>
</dbReference>
<dbReference type="Pfam" id="PF00684">
    <property type="entry name" value="DnaJ_CXXCXGXG"/>
    <property type="match status" value="1"/>
</dbReference>
<dbReference type="PRINTS" id="PR00625">
    <property type="entry name" value="JDOMAIN"/>
</dbReference>
<dbReference type="SMART" id="SM00271">
    <property type="entry name" value="DnaJ"/>
    <property type="match status" value="1"/>
</dbReference>
<dbReference type="SUPFAM" id="SSF46565">
    <property type="entry name" value="Chaperone J-domain"/>
    <property type="match status" value="1"/>
</dbReference>
<dbReference type="SUPFAM" id="SSF57938">
    <property type="entry name" value="DnaJ/Hsp40 cysteine-rich domain"/>
    <property type="match status" value="1"/>
</dbReference>
<dbReference type="SUPFAM" id="SSF49493">
    <property type="entry name" value="HSP40/DnaJ peptide-binding domain"/>
    <property type="match status" value="2"/>
</dbReference>
<dbReference type="PROSITE" id="PS00636">
    <property type="entry name" value="DNAJ_1"/>
    <property type="match status" value="1"/>
</dbReference>
<dbReference type="PROSITE" id="PS50076">
    <property type="entry name" value="DNAJ_2"/>
    <property type="match status" value="1"/>
</dbReference>
<dbReference type="PROSITE" id="PS51188">
    <property type="entry name" value="ZF_CR"/>
    <property type="match status" value="1"/>
</dbReference>